<comment type="function">
    <text evidence="3">May be involved in the transmission of sensory signals.</text>
</comment>
<comment type="subcellular location">
    <subcellularLocation>
        <location evidence="1">Cytoplasm</location>
    </subcellularLocation>
</comment>
<organism>
    <name type="scientific">Rhizobium etli (strain ATCC 51251 / DSM 11541 / JCM 21823 / NBRC 15573 / CFN 42)</name>
    <dbReference type="NCBI Taxonomy" id="347834"/>
    <lineage>
        <taxon>Bacteria</taxon>
        <taxon>Pseudomonadati</taxon>
        <taxon>Pseudomonadota</taxon>
        <taxon>Alphaproteobacteria</taxon>
        <taxon>Hyphomicrobiales</taxon>
        <taxon>Rhizobiaceae</taxon>
        <taxon>Rhizobium/Agrobacterium group</taxon>
        <taxon>Rhizobium</taxon>
    </lineage>
</organism>
<keyword id="KW-0145">Chemotaxis</keyword>
<keyword id="KW-0963">Cytoplasm</keyword>
<keyword id="KW-1185">Reference proteome</keyword>
<reference key="1">
    <citation type="journal article" date="2006" name="Proc. Natl. Acad. Sci. U.S.A.">
        <title>The partitioned Rhizobium etli genome: genetic and metabolic redundancy in seven interacting replicons.</title>
        <authorList>
            <person name="Gonzalez V."/>
            <person name="Santamaria R.I."/>
            <person name="Bustos P."/>
            <person name="Hernandez-Gonzalez I."/>
            <person name="Medrano-Soto A."/>
            <person name="Moreno-Hagelsieb G."/>
            <person name="Janga S.C."/>
            <person name="Ramirez M.A."/>
            <person name="Jimenez-Jacinto V."/>
            <person name="Collado-Vides J."/>
            <person name="Davila G."/>
        </authorList>
    </citation>
    <scope>NUCLEOTIDE SEQUENCE [LARGE SCALE GENOMIC DNA]</scope>
    <source>
        <strain>ATCC 51251 / DSM 11541 / JCM 21823 / NBRC 15573 / CFN 42</strain>
    </source>
</reference>
<dbReference type="EMBL" id="CP000133">
    <property type="protein sequence ID" value="ABC89456.1"/>
    <property type="molecule type" value="Genomic_DNA"/>
</dbReference>
<dbReference type="RefSeq" id="WP_011424005.1">
    <property type="nucleotide sequence ID" value="NC_007761.1"/>
</dbReference>
<dbReference type="SMR" id="Q2KCI0"/>
<dbReference type="KEGG" id="ret:RHE_CH00641"/>
<dbReference type="eggNOG" id="COG0835">
    <property type="taxonomic scope" value="Bacteria"/>
</dbReference>
<dbReference type="HOGENOM" id="CLU_048995_3_4_5"/>
<dbReference type="OrthoDB" id="9794382at2"/>
<dbReference type="Proteomes" id="UP000001936">
    <property type="component" value="Chromosome"/>
</dbReference>
<dbReference type="GO" id="GO:0005829">
    <property type="term" value="C:cytosol"/>
    <property type="evidence" value="ECO:0007669"/>
    <property type="project" value="TreeGrafter"/>
</dbReference>
<dbReference type="GO" id="GO:0006935">
    <property type="term" value="P:chemotaxis"/>
    <property type="evidence" value="ECO:0007669"/>
    <property type="project" value="UniProtKB-KW"/>
</dbReference>
<dbReference type="GO" id="GO:0007165">
    <property type="term" value="P:signal transduction"/>
    <property type="evidence" value="ECO:0007669"/>
    <property type="project" value="InterPro"/>
</dbReference>
<dbReference type="CDD" id="cd00732">
    <property type="entry name" value="CheW"/>
    <property type="match status" value="1"/>
</dbReference>
<dbReference type="Gene3D" id="2.40.50.180">
    <property type="entry name" value="CheA-289, Domain 4"/>
    <property type="match status" value="1"/>
</dbReference>
<dbReference type="Gene3D" id="2.30.30.40">
    <property type="entry name" value="SH3 Domains"/>
    <property type="match status" value="1"/>
</dbReference>
<dbReference type="InterPro" id="IPR039315">
    <property type="entry name" value="CheW"/>
</dbReference>
<dbReference type="InterPro" id="IPR036061">
    <property type="entry name" value="CheW-like_dom_sf"/>
</dbReference>
<dbReference type="InterPro" id="IPR002545">
    <property type="entry name" value="CheW-lke_dom"/>
</dbReference>
<dbReference type="PANTHER" id="PTHR22617:SF23">
    <property type="entry name" value="CHEMOTAXIS PROTEIN CHEW"/>
    <property type="match status" value="1"/>
</dbReference>
<dbReference type="PANTHER" id="PTHR22617">
    <property type="entry name" value="CHEMOTAXIS SENSOR HISTIDINE KINASE-RELATED"/>
    <property type="match status" value="1"/>
</dbReference>
<dbReference type="Pfam" id="PF01584">
    <property type="entry name" value="CheW"/>
    <property type="match status" value="1"/>
</dbReference>
<dbReference type="SMART" id="SM00260">
    <property type="entry name" value="CheW"/>
    <property type="match status" value="1"/>
</dbReference>
<dbReference type="SUPFAM" id="SSF50341">
    <property type="entry name" value="CheW-like"/>
    <property type="match status" value="1"/>
</dbReference>
<dbReference type="PROSITE" id="PS50851">
    <property type="entry name" value="CHEW"/>
    <property type="match status" value="1"/>
</dbReference>
<feature type="chain" id="PRO_0000239041" description="Probable chemotaxis protein CheW">
    <location>
        <begin position="1"/>
        <end position="155"/>
    </location>
</feature>
<feature type="domain" description="CheW-like" evidence="2">
    <location>
        <begin position="12"/>
        <end position="152"/>
    </location>
</feature>
<gene>
    <name type="primary">cheW</name>
    <name type="ordered locus">RHE_CH00640</name>
    <name type="ORF">RHE_CH00641</name>
</gene>
<evidence type="ECO:0000250" key="1"/>
<evidence type="ECO:0000255" key="2">
    <source>
        <dbReference type="PROSITE-ProRule" id="PRU00052"/>
    </source>
</evidence>
<evidence type="ECO:0000305" key="3"/>
<proteinExistence type="inferred from homology"/>
<accession>Q2KCI0</accession>
<name>CHEW_RHIEC</name>
<protein>
    <recommendedName>
        <fullName>Probable chemotaxis protein CheW</fullName>
    </recommendedName>
</protein>
<sequence>MSYAVKSLNQGDRELIAFRIGDQEFCVNIMSVREIRGWTPATAMPHSPAYMLGVINLRGAVLPIIDLAARLGMKPADPTARHVIIVAQVRRKVVGLLVDAVSDILTVTDEIIQPTPEISSDLERQFARGILAIDKRMICLIELEALFSETESEAA</sequence>